<gene>
    <name evidence="2" type="primary">cbbL</name>
    <name evidence="2 5" type="synonym">rbcL</name>
    <name type="ordered locus">slr0009</name>
</gene>
<accession>P54205</accession>
<evidence type="ECO:0000250" key="1">
    <source>
        <dbReference type="UniProtKB" id="Q31NB3"/>
    </source>
</evidence>
<evidence type="ECO:0000255" key="2">
    <source>
        <dbReference type="HAMAP-Rule" id="MF_01338"/>
    </source>
</evidence>
<evidence type="ECO:0000269" key="3">
    <source>
    </source>
</evidence>
<evidence type="ECO:0000269" key="4">
    <source>
    </source>
</evidence>
<evidence type="ECO:0000303" key="5">
    <source>
    </source>
</evidence>
<sequence length="470" mass="52491">MVQAKAGFKAGVQDYRLTYYTPDYTPKDTDLLACFRMTPQPGVPAEEAAAAVAAESSTGTWTTVWTDNLTDLDRYKGRCYDLEAVPNEDNQYFAFIAYPLDLFEEGSVTNVLTSLVGNVFGFKALRALRLEDIRFPVALIKTFQGPPHGITVERDKLNKYGRPLLGCTIKPKLGLSAKNYGRAVYECLRGGLDFTKDDENINSQPFMRWRDRFLFVQEAIEKAQAETNEMKGHYLNVTAGTCEEMMKRAEFAKEIGTPIIMHDFFTGGFTANTTLARWCRDNGILLHIHRAMHAVVDRQKNHGIHFRVLAKCLRLSGGDHLHSGTVVGKLEGERGITMGFVDLMREDYVEEDRSRGIFFTQDYASMPGTMPVASGGIHVWHMPALVEIFGDDSCLQFGGGTLGHPWGNAPGATANRVALEACVQARNEGRNLAREGNDVIREACRWSPELAAACELWKEIKFEFEAMDTL</sequence>
<organism>
    <name type="scientific">Synechocystis sp. (strain ATCC 27184 / PCC 6803 / Kazusa)</name>
    <dbReference type="NCBI Taxonomy" id="1111708"/>
    <lineage>
        <taxon>Bacteria</taxon>
        <taxon>Bacillati</taxon>
        <taxon>Cyanobacteriota</taxon>
        <taxon>Cyanophyceae</taxon>
        <taxon>Synechococcales</taxon>
        <taxon>Merismopediaceae</taxon>
        <taxon>Synechocystis</taxon>
    </lineage>
</organism>
<reference key="1">
    <citation type="journal article" date="1993" name="Plant Mol. Biol.">
        <title>Construction of a Synechocystis PCC6803 mutant suitable for the study of variant hexadecameric ribulose bisphosphate carboxylase/oxygenase enzymes.</title>
        <authorList>
            <person name="Amichay D."/>
            <person name="Levitz R."/>
            <person name="Gurevitz M."/>
        </authorList>
    </citation>
    <scope>NUCLEOTIDE SEQUENCE [GENOMIC DNA]</scope>
</reference>
<reference key="2">
    <citation type="journal article" date="1995" name="DNA Res.">
        <title>Sequence analysis of the genome of the unicellular cyanobacterium Synechocystis sp. strain PCC6803. I. Sequence features in the 1 Mb region from map positions 64% to 92% of the genome.</title>
        <authorList>
            <person name="Kaneko T."/>
            <person name="Tanaka A."/>
            <person name="Sato S."/>
            <person name="Kotani H."/>
            <person name="Sazuka T."/>
            <person name="Miyajima N."/>
            <person name="Sugiura M."/>
            <person name="Tabata S."/>
        </authorList>
    </citation>
    <scope>NUCLEOTIDE SEQUENCE [LARGE SCALE GENOMIC DNA]</scope>
    <source>
        <strain>ATCC 27184 / PCC 6803 / N-1</strain>
    </source>
</reference>
<reference key="3">
    <citation type="journal article" date="1996" name="DNA Res.">
        <title>Sequence analysis of the genome of the unicellular cyanobacterium Synechocystis sp. strain PCC6803. II. Sequence determination of the entire genome and assignment of potential protein-coding regions.</title>
        <authorList>
            <person name="Kaneko T."/>
            <person name="Sato S."/>
            <person name="Kotani H."/>
            <person name="Tanaka A."/>
            <person name="Asamizu E."/>
            <person name="Nakamura Y."/>
            <person name="Miyajima N."/>
            <person name="Hirosawa M."/>
            <person name="Sugiura M."/>
            <person name="Sasamoto S."/>
            <person name="Kimura T."/>
            <person name="Hosouchi T."/>
            <person name="Matsuno A."/>
            <person name="Muraki A."/>
            <person name="Nakazaki N."/>
            <person name="Naruo K."/>
            <person name="Okumura S."/>
            <person name="Shimpo S."/>
            <person name="Takeuchi C."/>
            <person name="Wada T."/>
            <person name="Watanabe A."/>
            <person name="Yamada M."/>
            <person name="Yasuda M."/>
            <person name="Tabata S."/>
        </authorList>
    </citation>
    <scope>NUCLEOTIDE SEQUENCE [LARGE SCALE GENOMIC DNA]</scope>
    <source>
        <strain>ATCC 27184 / PCC 6803 / Kazusa</strain>
    </source>
</reference>
<reference key="4">
    <citation type="journal article" date="2002" name="Planta">
        <title>Characterization of a mutant lacking carboxysomal carbonic anhydrase from the cyanobacterium Synechocystis PCC6803.</title>
        <authorList>
            <person name="So A.K."/>
            <person name="John-McKay M."/>
            <person name="Espie G.S."/>
        </authorList>
    </citation>
    <scope>SUBCELLULAR LOCATION</scope>
    <source>
        <strain>ATCC 27184 / PCC 6803 / Kazusa</strain>
    </source>
</reference>
<reference key="5">
    <citation type="journal article" date="2008" name="J. Bacteriol.">
        <title>A multiprotein bicarbonate dehydration complex essential to carboxysome function in cyanobacteria.</title>
        <authorList>
            <person name="Cot S.S."/>
            <person name="So A.K."/>
            <person name="Espie G.S."/>
        </authorList>
    </citation>
    <scope>INTERACTION WITH CCMM</scope>
    <scope>SUBCELLULAR LOCATION</scope>
    <source>
        <strain>ATCC 27184 / PCC 6803 / Kazusa</strain>
    </source>
</reference>
<comment type="function">
    <text evidence="2">RuBisCO catalyzes two reactions: the carboxylation of D-ribulose 1,5-bisphosphate, the primary event in carbon dioxide fixation, as well as the oxidative fragmentation of the pentose substrate in the photorespiration process. Both reactions occur simultaneously and in competition at the same active site.</text>
</comment>
<comment type="catalytic activity">
    <reaction evidence="2">
        <text>2 (2R)-3-phosphoglycerate + 2 H(+) = D-ribulose 1,5-bisphosphate + CO2 + H2O</text>
        <dbReference type="Rhea" id="RHEA:23124"/>
        <dbReference type="ChEBI" id="CHEBI:15377"/>
        <dbReference type="ChEBI" id="CHEBI:15378"/>
        <dbReference type="ChEBI" id="CHEBI:16526"/>
        <dbReference type="ChEBI" id="CHEBI:57870"/>
        <dbReference type="ChEBI" id="CHEBI:58272"/>
        <dbReference type="EC" id="4.1.1.39"/>
    </reaction>
</comment>
<comment type="catalytic activity">
    <reaction evidence="2">
        <text>D-ribulose 1,5-bisphosphate + O2 = 2-phosphoglycolate + (2R)-3-phosphoglycerate + 2 H(+)</text>
        <dbReference type="Rhea" id="RHEA:36631"/>
        <dbReference type="ChEBI" id="CHEBI:15378"/>
        <dbReference type="ChEBI" id="CHEBI:15379"/>
        <dbReference type="ChEBI" id="CHEBI:57870"/>
        <dbReference type="ChEBI" id="CHEBI:58033"/>
        <dbReference type="ChEBI" id="CHEBI:58272"/>
    </reaction>
</comment>
<comment type="cofactor">
    <cofactor evidence="2">
        <name>Mg(2+)</name>
        <dbReference type="ChEBI" id="CHEBI:18420"/>
    </cofactor>
    <text evidence="2">Binds 1 Mg(2+) ion per subunit.</text>
</comment>
<comment type="subunit">
    <text evidence="2 4">Heterohexadecamer of 8 large chains and 8 small chains; disulfide-linked. The disulfide link is formed within the large subunit homodimers (By similarity). RuBisCO interacts with the C-terminus of CcmM, and can be found in complexes that also include carbonic anhydrase (ccaA). RuBisCO associates with both the internal and shell portion of carboxysomes (PubMed:17993516).</text>
</comment>
<comment type="interaction">
    <interactant intactId="EBI-862277">
        <id>P54205</id>
    </interactant>
    <interactant intactId="EBI-862916">
        <id>P52231</id>
        <label>trxA</label>
    </interactant>
    <organismsDiffer>false</organismsDiffer>
    <experiments>3</experiments>
</comment>
<comment type="subcellular location">
    <subcellularLocation>
        <location evidence="2 3 4">Carboxysome</location>
    </subcellularLocation>
    <text evidence="1 4">This cyanobacterium makes beta-type carboxysomes (PubMed:17993516). In the carboxysome RuBisCO is organized into a paracrystalline array (By similarity).</text>
</comment>
<comment type="PTM">
    <text evidence="2">The disulfide bond which can form in the large chain dimeric partners within the hexadecamer appears to be associated with oxidative stress and protein turnover.</text>
</comment>
<comment type="miscellaneous">
    <text evidence="2">The basic functional RuBisCO is composed of a large chain homodimer in a 'head-to-tail' conformation. In form I RuBisCO this homodimer is arranged in a barrel-like tetramer with the small subunits forming a tetrameric 'cap' on each end of the 'barrel'.</text>
</comment>
<comment type="similarity">
    <text evidence="2">Belongs to the RuBisCO large chain family. Type I subfamily.</text>
</comment>
<feature type="chain" id="PRO_0000062655" description="Ribulose bisphosphate carboxylase large chain">
    <location>
        <begin position="1"/>
        <end position="470"/>
    </location>
</feature>
<feature type="active site" description="Proton acceptor" evidence="2">
    <location>
        <position position="170"/>
    </location>
</feature>
<feature type="active site" description="Proton acceptor" evidence="2">
    <location>
        <position position="289"/>
    </location>
</feature>
<feature type="binding site" description="in homodimeric partner" evidence="2">
    <location>
        <position position="118"/>
    </location>
    <ligand>
        <name>substrate</name>
    </ligand>
</feature>
<feature type="binding site" evidence="2">
    <location>
        <position position="168"/>
    </location>
    <ligand>
        <name>substrate</name>
    </ligand>
</feature>
<feature type="binding site" evidence="2">
    <location>
        <position position="172"/>
    </location>
    <ligand>
        <name>substrate</name>
    </ligand>
</feature>
<feature type="binding site" description="via carbamate group" evidence="2">
    <location>
        <position position="196"/>
    </location>
    <ligand>
        <name>Mg(2+)</name>
        <dbReference type="ChEBI" id="CHEBI:18420"/>
    </ligand>
</feature>
<feature type="binding site" evidence="2">
    <location>
        <position position="198"/>
    </location>
    <ligand>
        <name>Mg(2+)</name>
        <dbReference type="ChEBI" id="CHEBI:18420"/>
    </ligand>
</feature>
<feature type="binding site" evidence="2">
    <location>
        <position position="199"/>
    </location>
    <ligand>
        <name>Mg(2+)</name>
        <dbReference type="ChEBI" id="CHEBI:18420"/>
    </ligand>
</feature>
<feature type="binding site" evidence="2">
    <location>
        <position position="290"/>
    </location>
    <ligand>
        <name>substrate</name>
    </ligand>
</feature>
<feature type="binding site" evidence="2">
    <location>
        <position position="322"/>
    </location>
    <ligand>
        <name>substrate</name>
    </ligand>
</feature>
<feature type="binding site" evidence="2">
    <location>
        <position position="374"/>
    </location>
    <ligand>
        <name>substrate</name>
    </ligand>
</feature>
<feature type="site" description="Transition state stabilizer" evidence="2">
    <location>
        <position position="329"/>
    </location>
</feature>
<feature type="modified residue" description="N6-carboxylysine" evidence="2">
    <location>
        <position position="196"/>
    </location>
</feature>
<feature type="disulfide bond" description="Interchain; in linked form" evidence="2">
    <location>
        <position position="242"/>
    </location>
</feature>
<protein>
    <recommendedName>
        <fullName evidence="2">Ribulose bisphosphate carboxylase large chain</fullName>
        <shortName evidence="2">RuBisCO large subunit</shortName>
        <ecNumber evidence="2">4.1.1.39</ecNumber>
    </recommendedName>
</protein>
<keyword id="KW-1283">Bacterial microcompartment</keyword>
<keyword id="KW-0113">Calvin cycle</keyword>
<keyword id="KW-0120">Carbon dioxide fixation</keyword>
<keyword id="KW-1282">Carboxysome</keyword>
<keyword id="KW-1015">Disulfide bond</keyword>
<keyword id="KW-0456">Lyase</keyword>
<keyword id="KW-0460">Magnesium</keyword>
<keyword id="KW-0479">Metal-binding</keyword>
<keyword id="KW-0503">Monooxygenase</keyword>
<keyword id="KW-0560">Oxidoreductase</keyword>
<keyword id="KW-0601">Photorespiration</keyword>
<keyword id="KW-0602">Photosynthesis</keyword>
<keyword id="KW-1185">Reference proteome</keyword>
<dbReference type="EC" id="4.1.1.39" evidence="2"/>
<dbReference type="EMBL" id="X65960">
    <property type="protein sequence ID" value="CAA46773.1"/>
    <property type="molecule type" value="Genomic_DNA"/>
</dbReference>
<dbReference type="EMBL" id="BA000022">
    <property type="protein sequence ID" value="BAA10190.1"/>
    <property type="molecule type" value="Genomic_DNA"/>
</dbReference>
<dbReference type="PIR" id="S39561">
    <property type="entry name" value="S39561"/>
</dbReference>
<dbReference type="SMR" id="P54205"/>
<dbReference type="FunCoup" id="P54205">
    <property type="interactions" value="132"/>
</dbReference>
<dbReference type="IntAct" id="P54205">
    <property type="interactions" value="4"/>
</dbReference>
<dbReference type="STRING" id="1148.gene:10499687"/>
<dbReference type="PaxDb" id="1148-1001563"/>
<dbReference type="EnsemblBacteria" id="BAA10190">
    <property type="protein sequence ID" value="BAA10190"/>
    <property type="gene ID" value="BAA10190"/>
</dbReference>
<dbReference type="KEGG" id="syn:slr0009"/>
<dbReference type="eggNOG" id="COG1850">
    <property type="taxonomic scope" value="Bacteria"/>
</dbReference>
<dbReference type="InParanoid" id="P54205"/>
<dbReference type="PhylomeDB" id="P54205"/>
<dbReference type="BioCyc" id="MetaCyc:MONOMER-750"/>
<dbReference type="BRENDA" id="4.1.1.39">
    <property type="organism ID" value="382"/>
</dbReference>
<dbReference type="SABIO-RK" id="P54205"/>
<dbReference type="Proteomes" id="UP000001425">
    <property type="component" value="Chromosome"/>
</dbReference>
<dbReference type="GO" id="GO:0031470">
    <property type="term" value="C:carboxysome"/>
    <property type="evidence" value="ECO:0000314"/>
    <property type="project" value="UniProtKB"/>
</dbReference>
<dbReference type="GO" id="GO:0000287">
    <property type="term" value="F:magnesium ion binding"/>
    <property type="evidence" value="ECO:0007669"/>
    <property type="project" value="UniProtKB-UniRule"/>
</dbReference>
<dbReference type="GO" id="GO:0004497">
    <property type="term" value="F:monooxygenase activity"/>
    <property type="evidence" value="ECO:0007669"/>
    <property type="project" value="UniProtKB-KW"/>
</dbReference>
<dbReference type="GO" id="GO:0016984">
    <property type="term" value="F:ribulose-bisphosphate carboxylase activity"/>
    <property type="evidence" value="ECO:0007669"/>
    <property type="project" value="UniProtKB-UniRule"/>
</dbReference>
<dbReference type="GO" id="GO:0009853">
    <property type="term" value="P:photorespiration"/>
    <property type="evidence" value="ECO:0007669"/>
    <property type="project" value="UniProtKB-KW"/>
</dbReference>
<dbReference type="GO" id="GO:0019253">
    <property type="term" value="P:reductive pentose-phosphate cycle"/>
    <property type="evidence" value="ECO:0007669"/>
    <property type="project" value="UniProtKB-UniRule"/>
</dbReference>
<dbReference type="CDD" id="cd08212">
    <property type="entry name" value="RuBisCO_large_I"/>
    <property type="match status" value="1"/>
</dbReference>
<dbReference type="Gene3D" id="3.20.20.110">
    <property type="entry name" value="Ribulose bisphosphate carboxylase, large subunit, C-terminal domain"/>
    <property type="match status" value="1"/>
</dbReference>
<dbReference type="Gene3D" id="3.30.70.150">
    <property type="entry name" value="RuBisCO large subunit, N-terminal domain"/>
    <property type="match status" value="1"/>
</dbReference>
<dbReference type="HAMAP" id="MF_01338">
    <property type="entry name" value="RuBisCO_L_type1"/>
    <property type="match status" value="1"/>
</dbReference>
<dbReference type="InterPro" id="IPR033966">
    <property type="entry name" value="RuBisCO"/>
</dbReference>
<dbReference type="InterPro" id="IPR020878">
    <property type="entry name" value="RuBisCo_large_chain_AS"/>
</dbReference>
<dbReference type="InterPro" id="IPR000685">
    <property type="entry name" value="RuBisCO_lsu_C"/>
</dbReference>
<dbReference type="InterPro" id="IPR036376">
    <property type="entry name" value="RuBisCO_lsu_C_sf"/>
</dbReference>
<dbReference type="InterPro" id="IPR017443">
    <property type="entry name" value="RuBisCO_lsu_fd_N"/>
</dbReference>
<dbReference type="InterPro" id="IPR036422">
    <property type="entry name" value="RuBisCO_lsu_N_sf"/>
</dbReference>
<dbReference type="InterPro" id="IPR020888">
    <property type="entry name" value="RuBisCO_lsuI"/>
</dbReference>
<dbReference type="NCBIfam" id="NF003252">
    <property type="entry name" value="PRK04208.1"/>
    <property type="match status" value="1"/>
</dbReference>
<dbReference type="PANTHER" id="PTHR42704">
    <property type="entry name" value="RIBULOSE BISPHOSPHATE CARBOXYLASE"/>
    <property type="match status" value="1"/>
</dbReference>
<dbReference type="PANTHER" id="PTHR42704:SF17">
    <property type="entry name" value="RIBULOSE BISPHOSPHATE CARBOXYLASE LARGE CHAIN"/>
    <property type="match status" value="1"/>
</dbReference>
<dbReference type="Pfam" id="PF00016">
    <property type="entry name" value="RuBisCO_large"/>
    <property type="match status" value="1"/>
</dbReference>
<dbReference type="Pfam" id="PF02788">
    <property type="entry name" value="RuBisCO_large_N"/>
    <property type="match status" value="1"/>
</dbReference>
<dbReference type="SFLD" id="SFLDG01052">
    <property type="entry name" value="RuBisCO"/>
    <property type="match status" value="1"/>
</dbReference>
<dbReference type="SFLD" id="SFLDS00014">
    <property type="entry name" value="RuBisCO"/>
    <property type="match status" value="1"/>
</dbReference>
<dbReference type="SFLD" id="SFLDG00301">
    <property type="entry name" value="RuBisCO-like_proteins"/>
    <property type="match status" value="1"/>
</dbReference>
<dbReference type="SUPFAM" id="SSF51649">
    <property type="entry name" value="RuBisCo, C-terminal domain"/>
    <property type="match status" value="1"/>
</dbReference>
<dbReference type="SUPFAM" id="SSF54966">
    <property type="entry name" value="RuBisCO, large subunit, small (N-terminal) domain"/>
    <property type="match status" value="1"/>
</dbReference>
<dbReference type="PROSITE" id="PS00157">
    <property type="entry name" value="RUBISCO_LARGE"/>
    <property type="match status" value="1"/>
</dbReference>
<proteinExistence type="evidence at protein level"/>
<name>RBL_SYNY3</name>